<name>RL6_THEMA</name>
<reference key="1">
    <citation type="journal article" date="1994" name="J. Bacteriol.">
        <title>Phylogenetic depth of S10 and spc operons: cloning and sequencing of a ribosomal protein gene cluster from the extremely thermophilic bacterium Thermotoga maritima.</title>
        <authorList>
            <person name="Sanangelantoni A.M."/>
            <person name="Bocchetta M."/>
            <person name="Cammarano P."/>
            <person name="Tiboni O."/>
        </authorList>
    </citation>
    <scope>NUCLEOTIDE SEQUENCE [GENOMIC DNA]</scope>
    <source>
        <strain>ATCC 43589 / DSM 3109 / JCM 10099 / NBRC 100826 / MSB8</strain>
    </source>
</reference>
<reference key="2">
    <citation type="journal article" date="1999" name="Nature">
        <title>Evidence for lateral gene transfer between Archaea and Bacteria from genome sequence of Thermotoga maritima.</title>
        <authorList>
            <person name="Nelson K.E."/>
            <person name="Clayton R.A."/>
            <person name="Gill S.R."/>
            <person name="Gwinn M.L."/>
            <person name="Dodson R.J."/>
            <person name="Haft D.H."/>
            <person name="Hickey E.K."/>
            <person name="Peterson J.D."/>
            <person name="Nelson W.C."/>
            <person name="Ketchum K.A."/>
            <person name="McDonald L.A."/>
            <person name="Utterback T.R."/>
            <person name="Malek J.A."/>
            <person name="Linher K.D."/>
            <person name="Garrett M.M."/>
            <person name="Stewart A.M."/>
            <person name="Cotton M.D."/>
            <person name="Pratt M.S."/>
            <person name="Phillips C.A."/>
            <person name="Richardson D.L."/>
            <person name="Heidelberg J.F."/>
            <person name="Sutton G.G."/>
            <person name="Fleischmann R.D."/>
            <person name="Eisen J.A."/>
            <person name="White O."/>
            <person name="Salzberg S.L."/>
            <person name="Smith H.O."/>
            <person name="Venter J.C."/>
            <person name="Fraser C.M."/>
        </authorList>
    </citation>
    <scope>NUCLEOTIDE SEQUENCE [LARGE SCALE GENOMIC DNA]</scope>
    <source>
        <strain>ATCC 43589 / DSM 3109 / JCM 10099 / NBRC 100826 / MSB8</strain>
    </source>
</reference>
<evidence type="ECO:0000255" key="1">
    <source>
        <dbReference type="HAMAP-Rule" id="MF_01365"/>
    </source>
</evidence>
<evidence type="ECO:0000305" key="2"/>
<organism>
    <name type="scientific">Thermotoga maritima (strain ATCC 43589 / DSM 3109 / JCM 10099 / NBRC 100826 / MSB8)</name>
    <dbReference type="NCBI Taxonomy" id="243274"/>
    <lineage>
        <taxon>Bacteria</taxon>
        <taxon>Thermotogati</taxon>
        <taxon>Thermotogota</taxon>
        <taxon>Thermotogae</taxon>
        <taxon>Thermotogales</taxon>
        <taxon>Thermotogaceae</taxon>
        <taxon>Thermotoga</taxon>
    </lineage>
</organism>
<sequence>MSRLAKKPIVLPQGVTVEIKDNVVKVKGPKGELSQEFLPYVKIEVEGNEVWVRPNEEQIIRKSDWRKVKMFQGTYWSLIRNMVVGVTEGYKKELEIVGIGYRAQLQGNTLVMNLGYAHPVVYEIPSDVKIEVPAPNRIIVSGIDKQRVGQVAAEIRAFRPPNVYTGKGIRYVGEVVRQKEGKKA</sequence>
<accession>Q9ZAE4</accession>
<dbReference type="EMBL" id="Z21677">
    <property type="protein sequence ID" value="CAA79792.1"/>
    <property type="molecule type" value="Genomic_DNA"/>
</dbReference>
<dbReference type="EMBL" id="AE000512">
    <property type="protein sequence ID" value="AAD36551.1"/>
    <property type="molecule type" value="Genomic_DNA"/>
</dbReference>
<dbReference type="PIR" id="E72248">
    <property type="entry name" value="E72248"/>
</dbReference>
<dbReference type="RefSeq" id="NP_229285.1">
    <property type="nucleotide sequence ID" value="NC_000853.1"/>
</dbReference>
<dbReference type="RefSeq" id="WP_004081804.1">
    <property type="nucleotide sequence ID" value="NC_000853.1"/>
</dbReference>
<dbReference type="SMR" id="Q9ZAE4"/>
<dbReference type="FunCoup" id="Q9ZAE4">
    <property type="interactions" value="400"/>
</dbReference>
<dbReference type="STRING" id="243274.TM_1485"/>
<dbReference type="PaxDb" id="243274-THEMA_06875"/>
<dbReference type="EnsemblBacteria" id="AAD36551">
    <property type="protein sequence ID" value="AAD36551"/>
    <property type="gene ID" value="TM_1485"/>
</dbReference>
<dbReference type="KEGG" id="tma:TM1485"/>
<dbReference type="KEGG" id="tmi:THEMA_06875"/>
<dbReference type="KEGG" id="tmm:Tmari_1493"/>
<dbReference type="KEGG" id="tmw:THMA_1517"/>
<dbReference type="eggNOG" id="COG0097">
    <property type="taxonomic scope" value="Bacteria"/>
</dbReference>
<dbReference type="InParanoid" id="Q9ZAE4"/>
<dbReference type="OrthoDB" id="9805007at2"/>
<dbReference type="Proteomes" id="UP000008183">
    <property type="component" value="Chromosome"/>
</dbReference>
<dbReference type="GO" id="GO:0022625">
    <property type="term" value="C:cytosolic large ribosomal subunit"/>
    <property type="evidence" value="ECO:0000318"/>
    <property type="project" value="GO_Central"/>
</dbReference>
<dbReference type="GO" id="GO:0019843">
    <property type="term" value="F:rRNA binding"/>
    <property type="evidence" value="ECO:0007669"/>
    <property type="project" value="UniProtKB-UniRule"/>
</dbReference>
<dbReference type="GO" id="GO:0003735">
    <property type="term" value="F:structural constituent of ribosome"/>
    <property type="evidence" value="ECO:0000318"/>
    <property type="project" value="GO_Central"/>
</dbReference>
<dbReference type="GO" id="GO:0002181">
    <property type="term" value="P:cytoplasmic translation"/>
    <property type="evidence" value="ECO:0000318"/>
    <property type="project" value="GO_Central"/>
</dbReference>
<dbReference type="FunFam" id="3.90.930.12:FF:000001">
    <property type="entry name" value="50S ribosomal protein L6"/>
    <property type="match status" value="1"/>
</dbReference>
<dbReference type="FunFam" id="3.90.930.12:FF:000002">
    <property type="entry name" value="50S ribosomal protein L6"/>
    <property type="match status" value="1"/>
</dbReference>
<dbReference type="Gene3D" id="3.90.930.12">
    <property type="entry name" value="Ribosomal protein L6, alpha-beta domain"/>
    <property type="match status" value="2"/>
</dbReference>
<dbReference type="HAMAP" id="MF_01365_B">
    <property type="entry name" value="Ribosomal_uL6_B"/>
    <property type="match status" value="1"/>
</dbReference>
<dbReference type="InterPro" id="IPR000702">
    <property type="entry name" value="Ribosomal_uL6-like"/>
</dbReference>
<dbReference type="InterPro" id="IPR036789">
    <property type="entry name" value="Ribosomal_uL6-like_a/b-dom_sf"/>
</dbReference>
<dbReference type="InterPro" id="IPR020040">
    <property type="entry name" value="Ribosomal_uL6_a/b-dom"/>
</dbReference>
<dbReference type="InterPro" id="IPR019906">
    <property type="entry name" value="Ribosomal_uL6_bac-type"/>
</dbReference>
<dbReference type="NCBIfam" id="TIGR03654">
    <property type="entry name" value="L6_bact"/>
    <property type="match status" value="1"/>
</dbReference>
<dbReference type="PANTHER" id="PTHR11655">
    <property type="entry name" value="60S/50S RIBOSOMAL PROTEIN L6/L9"/>
    <property type="match status" value="1"/>
</dbReference>
<dbReference type="PANTHER" id="PTHR11655:SF14">
    <property type="entry name" value="LARGE RIBOSOMAL SUBUNIT PROTEIN UL6M"/>
    <property type="match status" value="1"/>
</dbReference>
<dbReference type="Pfam" id="PF00347">
    <property type="entry name" value="Ribosomal_L6"/>
    <property type="match status" value="2"/>
</dbReference>
<dbReference type="PIRSF" id="PIRSF002162">
    <property type="entry name" value="Ribosomal_L6"/>
    <property type="match status" value="1"/>
</dbReference>
<dbReference type="PRINTS" id="PR00059">
    <property type="entry name" value="RIBOSOMALL6"/>
</dbReference>
<dbReference type="SUPFAM" id="SSF56053">
    <property type="entry name" value="Ribosomal protein L6"/>
    <property type="match status" value="2"/>
</dbReference>
<keyword id="KW-1185">Reference proteome</keyword>
<keyword id="KW-0687">Ribonucleoprotein</keyword>
<keyword id="KW-0689">Ribosomal protein</keyword>
<keyword id="KW-0694">RNA-binding</keyword>
<keyword id="KW-0699">rRNA-binding</keyword>
<feature type="chain" id="PRO_0000131071" description="Large ribosomal subunit protein uL6">
    <location>
        <begin position="1"/>
        <end position="184"/>
    </location>
</feature>
<feature type="sequence conflict" description="In Ref. 1; CAA79792." evidence="2" ref="1">
    <original>V</original>
    <variation>G</variation>
    <location>
        <position position="50"/>
    </location>
</feature>
<comment type="function">
    <text evidence="1">This protein binds to the 23S rRNA, and is important in its secondary structure. It is located near the subunit interface in the base of the L7/L12 stalk, and near the tRNA binding site of the peptidyltransferase center.</text>
</comment>
<comment type="subunit">
    <text evidence="1">Part of the 50S ribosomal subunit.</text>
</comment>
<comment type="similarity">
    <text evidence="1">Belongs to the universal ribosomal protein uL6 family.</text>
</comment>
<gene>
    <name evidence="1" type="primary">rplF</name>
    <name type="ordered locus">TM_1485</name>
</gene>
<proteinExistence type="inferred from homology"/>
<protein>
    <recommendedName>
        <fullName evidence="1">Large ribosomal subunit protein uL6</fullName>
    </recommendedName>
    <alternativeName>
        <fullName evidence="2">50S ribosomal protein L6</fullName>
    </alternativeName>
</protein>